<sequence>MKVLVLGAGVAGVSSAWYLAEAGHEVTVIDRAEGVAMETSFANAGQLSYGYTTPWAAPGIPTKALKWLFKSHPPLLFRPDGSLYQIEWLWQMLQNCTAAHYQTNKERMVRISEYSREMFRRFEAQTGMNFEERKKGTLQIFRQTKEVEAAEQDIAVLERYGVPYRRLKPEECAEFEPALARVTAKIASGLHLPADATGDCRLFTENLYKLCQEKGVRFHFNQTISRIDHNGLRIKTVETETGRFEADAVVCALGCFSRTVLAQLDLNLPIYPVKGYSLTLPVTNSDGAPVSTVLDESYKVAITRFDNRIRVGGMAELSGYEIKLPEKRRETLALVVNDLFPEGGDLSQASFWSGLRPMTPDSTPLIGRTRFDNLFLNTGHGTLGWTMSLGSAKLTADIVSGKDTEIRSDDLSLSRYQA</sequence>
<name>DADA_NEIM0</name>
<evidence type="ECO:0000255" key="1">
    <source>
        <dbReference type="HAMAP-Rule" id="MF_01202"/>
    </source>
</evidence>
<reference key="1">
    <citation type="journal article" date="2008" name="Genomics">
        <title>Characterization of ST-4821 complex, a unique Neisseria meningitidis clone.</title>
        <authorList>
            <person name="Peng J."/>
            <person name="Yang L."/>
            <person name="Yang F."/>
            <person name="Yang J."/>
            <person name="Yan Y."/>
            <person name="Nie H."/>
            <person name="Zhang X."/>
            <person name="Xiong Z."/>
            <person name="Jiang Y."/>
            <person name="Cheng F."/>
            <person name="Xu X."/>
            <person name="Chen S."/>
            <person name="Sun L."/>
            <person name="Li W."/>
            <person name="Shen Y."/>
            <person name="Shao Z."/>
            <person name="Liang X."/>
            <person name="Xu J."/>
            <person name="Jin Q."/>
        </authorList>
    </citation>
    <scope>NUCLEOTIDE SEQUENCE [LARGE SCALE GENOMIC DNA]</scope>
    <source>
        <strain>053442</strain>
    </source>
</reference>
<protein>
    <recommendedName>
        <fullName evidence="1">D-amino acid dehydrogenase</fullName>
        <ecNumber evidence="1">1.4.99.-</ecNumber>
    </recommendedName>
</protein>
<organism>
    <name type="scientific">Neisseria meningitidis serogroup C (strain 053442)</name>
    <dbReference type="NCBI Taxonomy" id="374833"/>
    <lineage>
        <taxon>Bacteria</taxon>
        <taxon>Pseudomonadati</taxon>
        <taxon>Pseudomonadota</taxon>
        <taxon>Betaproteobacteria</taxon>
        <taxon>Neisseriales</taxon>
        <taxon>Neisseriaceae</taxon>
        <taxon>Neisseria</taxon>
    </lineage>
</organism>
<comment type="function">
    <text evidence="1">Oxidative deamination of D-amino acids.</text>
</comment>
<comment type="catalytic activity">
    <reaction evidence="1">
        <text>a D-alpha-amino acid + A + H2O = a 2-oxocarboxylate + AH2 + NH4(+)</text>
        <dbReference type="Rhea" id="RHEA:18125"/>
        <dbReference type="ChEBI" id="CHEBI:13193"/>
        <dbReference type="ChEBI" id="CHEBI:15377"/>
        <dbReference type="ChEBI" id="CHEBI:17499"/>
        <dbReference type="ChEBI" id="CHEBI:28938"/>
        <dbReference type="ChEBI" id="CHEBI:35179"/>
        <dbReference type="ChEBI" id="CHEBI:59871"/>
    </reaction>
</comment>
<comment type="cofactor">
    <cofactor evidence="1">
        <name>FAD</name>
        <dbReference type="ChEBI" id="CHEBI:57692"/>
    </cofactor>
</comment>
<comment type="pathway">
    <text>Amino-acid degradation; D-alanine degradation; NH(3) and pyruvate from D-alanine: step 1/1.</text>
</comment>
<comment type="similarity">
    <text evidence="1">Belongs to the DadA oxidoreductase family.</text>
</comment>
<accession>A9M3T2</accession>
<keyword id="KW-0274">FAD</keyword>
<keyword id="KW-0285">Flavoprotein</keyword>
<keyword id="KW-0560">Oxidoreductase</keyword>
<feature type="chain" id="PRO_1000085513" description="D-amino acid dehydrogenase">
    <location>
        <begin position="1"/>
        <end position="418"/>
    </location>
</feature>
<feature type="binding site" evidence="1">
    <location>
        <begin position="3"/>
        <end position="17"/>
    </location>
    <ligand>
        <name>FAD</name>
        <dbReference type="ChEBI" id="CHEBI:57692"/>
    </ligand>
</feature>
<dbReference type="EC" id="1.4.99.-" evidence="1"/>
<dbReference type="EMBL" id="CP000381">
    <property type="protein sequence ID" value="ABX74100.1"/>
    <property type="molecule type" value="Genomic_DNA"/>
</dbReference>
<dbReference type="RefSeq" id="WP_012222126.1">
    <property type="nucleotide sequence ID" value="NC_010120.1"/>
</dbReference>
<dbReference type="SMR" id="A9M3T2"/>
<dbReference type="KEGG" id="nmn:NMCC_1976"/>
<dbReference type="HOGENOM" id="CLU_007884_9_2_4"/>
<dbReference type="UniPathway" id="UPA00043">
    <property type="reaction ID" value="UER00498"/>
</dbReference>
<dbReference type="Proteomes" id="UP000001177">
    <property type="component" value="Chromosome"/>
</dbReference>
<dbReference type="GO" id="GO:0005737">
    <property type="term" value="C:cytoplasm"/>
    <property type="evidence" value="ECO:0007669"/>
    <property type="project" value="TreeGrafter"/>
</dbReference>
<dbReference type="GO" id="GO:0005886">
    <property type="term" value="C:plasma membrane"/>
    <property type="evidence" value="ECO:0007669"/>
    <property type="project" value="TreeGrafter"/>
</dbReference>
<dbReference type="GO" id="GO:0008718">
    <property type="term" value="F:D-amino-acid dehydrogenase activity"/>
    <property type="evidence" value="ECO:0007669"/>
    <property type="project" value="UniProtKB-UniRule"/>
</dbReference>
<dbReference type="GO" id="GO:0055130">
    <property type="term" value="P:D-alanine catabolic process"/>
    <property type="evidence" value="ECO:0007669"/>
    <property type="project" value="UniProtKB-UniPathway"/>
</dbReference>
<dbReference type="FunFam" id="3.50.50.60:FF:000020">
    <property type="entry name" value="D-amino acid dehydrogenase"/>
    <property type="match status" value="1"/>
</dbReference>
<dbReference type="Gene3D" id="3.30.9.10">
    <property type="entry name" value="D-Amino Acid Oxidase, subunit A, domain 2"/>
    <property type="match status" value="1"/>
</dbReference>
<dbReference type="Gene3D" id="3.50.50.60">
    <property type="entry name" value="FAD/NAD(P)-binding domain"/>
    <property type="match status" value="2"/>
</dbReference>
<dbReference type="HAMAP" id="MF_01202">
    <property type="entry name" value="DadA"/>
    <property type="match status" value="1"/>
</dbReference>
<dbReference type="InterPro" id="IPR023080">
    <property type="entry name" value="DadA"/>
</dbReference>
<dbReference type="InterPro" id="IPR006076">
    <property type="entry name" value="FAD-dep_OxRdtase"/>
</dbReference>
<dbReference type="InterPro" id="IPR036188">
    <property type="entry name" value="FAD/NAD-bd_sf"/>
</dbReference>
<dbReference type="NCBIfam" id="NF001933">
    <property type="entry name" value="PRK00711.1"/>
    <property type="match status" value="1"/>
</dbReference>
<dbReference type="PANTHER" id="PTHR13847:SF280">
    <property type="entry name" value="D-AMINO ACID DEHYDROGENASE"/>
    <property type="match status" value="1"/>
</dbReference>
<dbReference type="PANTHER" id="PTHR13847">
    <property type="entry name" value="SARCOSINE DEHYDROGENASE-RELATED"/>
    <property type="match status" value="1"/>
</dbReference>
<dbReference type="Pfam" id="PF01266">
    <property type="entry name" value="DAO"/>
    <property type="match status" value="1"/>
</dbReference>
<dbReference type="SUPFAM" id="SSF54373">
    <property type="entry name" value="FAD-linked reductases, C-terminal domain"/>
    <property type="match status" value="1"/>
</dbReference>
<dbReference type="SUPFAM" id="SSF51905">
    <property type="entry name" value="FAD/NAD(P)-binding domain"/>
    <property type="match status" value="1"/>
</dbReference>
<proteinExistence type="inferred from homology"/>
<gene>
    <name evidence="1" type="primary">dadA</name>
    <name type="ordered locus">NMCC_1976</name>
</gene>